<feature type="chain" id="PRO_0000136478" description="Phosphoribosyl-AMP cyclohydrolase">
    <location>
        <begin position="1"/>
        <end position="108"/>
    </location>
</feature>
<feature type="binding site" evidence="1">
    <location>
        <position position="73"/>
    </location>
    <ligand>
        <name>Mg(2+)</name>
        <dbReference type="ChEBI" id="CHEBI:18420"/>
    </ligand>
</feature>
<feature type="binding site" evidence="1">
    <location>
        <position position="74"/>
    </location>
    <ligand>
        <name>Zn(2+)</name>
        <dbReference type="ChEBI" id="CHEBI:29105"/>
        <note>ligand shared between dimeric partners</note>
    </ligand>
</feature>
<feature type="binding site" evidence="1">
    <location>
        <position position="75"/>
    </location>
    <ligand>
        <name>Mg(2+)</name>
        <dbReference type="ChEBI" id="CHEBI:18420"/>
    </ligand>
</feature>
<feature type="binding site" evidence="1">
    <location>
        <position position="77"/>
    </location>
    <ligand>
        <name>Mg(2+)</name>
        <dbReference type="ChEBI" id="CHEBI:18420"/>
    </ligand>
</feature>
<feature type="binding site" evidence="1">
    <location>
        <position position="90"/>
    </location>
    <ligand>
        <name>Zn(2+)</name>
        <dbReference type="ChEBI" id="CHEBI:29105"/>
        <note>ligand shared between dimeric partners</note>
    </ligand>
</feature>
<feature type="binding site" evidence="1">
    <location>
        <position position="97"/>
    </location>
    <ligand>
        <name>Zn(2+)</name>
        <dbReference type="ChEBI" id="CHEBI:29105"/>
        <note>ligand shared between dimeric partners</note>
    </ligand>
</feature>
<protein>
    <recommendedName>
        <fullName evidence="1">Phosphoribosyl-AMP cyclohydrolase</fullName>
        <shortName evidence="1">PRA-CH</shortName>
        <ecNumber evidence="1">3.5.4.19</ecNumber>
    </recommendedName>
</protein>
<dbReference type="EC" id="3.5.4.19" evidence="1"/>
<dbReference type="EMBL" id="AL935263">
    <property type="protein sequence ID" value="CCC79709.1"/>
    <property type="molecule type" value="Genomic_DNA"/>
</dbReference>
<dbReference type="RefSeq" id="WP_003646591.1">
    <property type="nucleotide sequence ID" value="NC_004567.2"/>
</dbReference>
<dbReference type="RefSeq" id="YP_004890223.1">
    <property type="nucleotide sequence ID" value="NC_004567.2"/>
</dbReference>
<dbReference type="SMR" id="Q88UE4"/>
<dbReference type="STRING" id="220668.lp_2553"/>
<dbReference type="EnsemblBacteria" id="CCC79709">
    <property type="protein sequence ID" value="CCC79709"/>
    <property type="gene ID" value="lp_2553"/>
</dbReference>
<dbReference type="KEGG" id="lpl:lp_2553"/>
<dbReference type="PATRIC" id="fig|220668.9.peg.2145"/>
<dbReference type="eggNOG" id="COG0139">
    <property type="taxonomic scope" value="Bacteria"/>
</dbReference>
<dbReference type="HOGENOM" id="CLU_048577_5_3_9"/>
<dbReference type="OrthoDB" id="9795769at2"/>
<dbReference type="PhylomeDB" id="Q88UE4"/>
<dbReference type="UniPathway" id="UPA00031">
    <property type="reaction ID" value="UER00008"/>
</dbReference>
<dbReference type="Proteomes" id="UP000000432">
    <property type="component" value="Chromosome"/>
</dbReference>
<dbReference type="GO" id="GO:0005737">
    <property type="term" value="C:cytoplasm"/>
    <property type="evidence" value="ECO:0007669"/>
    <property type="project" value="UniProtKB-SubCell"/>
</dbReference>
<dbReference type="GO" id="GO:0000287">
    <property type="term" value="F:magnesium ion binding"/>
    <property type="evidence" value="ECO:0007669"/>
    <property type="project" value="UniProtKB-UniRule"/>
</dbReference>
<dbReference type="GO" id="GO:0004635">
    <property type="term" value="F:phosphoribosyl-AMP cyclohydrolase activity"/>
    <property type="evidence" value="ECO:0007669"/>
    <property type="project" value="UniProtKB-UniRule"/>
</dbReference>
<dbReference type="GO" id="GO:0008270">
    <property type="term" value="F:zinc ion binding"/>
    <property type="evidence" value="ECO:0007669"/>
    <property type="project" value="UniProtKB-UniRule"/>
</dbReference>
<dbReference type="GO" id="GO:0000105">
    <property type="term" value="P:L-histidine biosynthetic process"/>
    <property type="evidence" value="ECO:0007669"/>
    <property type="project" value="UniProtKB-UniRule"/>
</dbReference>
<dbReference type="FunFam" id="3.10.20.810:FF:000001">
    <property type="entry name" value="Histidine biosynthesis bifunctional protein HisIE"/>
    <property type="match status" value="1"/>
</dbReference>
<dbReference type="Gene3D" id="3.10.20.810">
    <property type="entry name" value="Phosphoribosyl-AMP cyclohydrolase"/>
    <property type="match status" value="1"/>
</dbReference>
<dbReference type="HAMAP" id="MF_01021">
    <property type="entry name" value="HisI"/>
    <property type="match status" value="1"/>
</dbReference>
<dbReference type="InterPro" id="IPR026660">
    <property type="entry name" value="PRA-CH"/>
</dbReference>
<dbReference type="InterPro" id="IPR002496">
    <property type="entry name" value="PRib_AMP_CycHydrolase_dom"/>
</dbReference>
<dbReference type="InterPro" id="IPR038019">
    <property type="entry name" value="PRib_AMP_CycHydrolase_sf"/>
</dbReference>
<dbReference type="NCBIfam" id="NF000768">
    <property type="entry name" value="PRK00051.1"/>
    <property type="match status" value="1"/>
</dbReference>
<dbReference type="PANTHER" id="PTHR42945">
    <property type="entry name" value="HISTIDINE BIOSYNTHESIS BIFUNCTIONAL PROTEIN"/>
    <property type="match status" value="1"/>
</dbReference>
<dbReference type="PANTHER" id="PTHR42945:SF9">
    <property type="entry name" value="HISTIDINE BIOSYNTHESIS BIFUNCTIONAL PROTEIN HISIE"/>
    <property type="match status" value="1"/>
</dbReference>
<dbReference type="Pfam" id="PF01502">
    <property type="entry name" value="PRA-CH"/>
    <property type="match status" value="1"/>
</dbReference>
<dbReference type="SUPFAM" id="SSF141734">
    <property type="entry name" value="HisI-like"/>
    <property type="match status" value="1"/>
</dbReference>
<proteinExistence type="inferred from homology"/>
<reference key="1">
    <citation type="journal article" date="2003" name="Proc. Natl. Acad. Sci. U.S.A.">
        <title>Complete genome sequence of Lactobacillus plantarum WCFS1.</title>
        <authorList>
            <person name="Kleerebezem M."/>
            <person name="Boekhorst J."/>
            <person name="van Kranenburg R."/>
            <person name="Molenaar D."/>
            <person name="Kuipers O.P."/>
            <person name="Leer R."/>
            <person name="Tarchini R."/>
            <person name="Peters S.A."/>
            <person name="Sandbrink H.M."/>
            <person name="Fiers M.W.E.J."/>
            <person name="Stiekema W."/>
            <person name="Klein Lankhorst R.M."/>
            <person name="Bron P.A."/>
            <person name="Hoffer S.M."/>
            <person name="Nierop Groot M.N."/>
            <person name="Kerkhoven R."/>
            <person name="De Vries M."/>
            <person name="Ursing B."/>
            <person name="De Vos W.M."/>
            <person name="Siezen R.J."/>
        </authorList>
    </citation>
    <scope>NUCLEOTIDE SEQUENCE [LARGE SCALE GENOMIC DNA]</scope>
    <source>
        <strain>ATCC BAA-793 / NCIMB 8826 / WCFS1</strain>
    </source>
</reference>
<reference key="2">
    <citation type="journal article" date="2012" name="J. Bacteriol.">
        <title>Complete resequencing and reannotation of the Lactobacillus plantarum WCFS1 genome.</title>
        <authorList>
            <person name="Siezen R.J."/>
            <person name="Francke C."/>
            <person name="Renckens B."/>
            <person name="Boekhorst J."/>
            <person name="Wels M."/>
            <person name="Kleerebezem M."/>
            <person name="van Hijum S.A."/>
        </authorList>
    </citation>
    <scope>NUCLEOTIDE SEQUENCE [LARGE SCALE GENOMIC DNA]</scope>
    <scope>GENOME REANNOTATION</scope>
    <source>
        <strain>ATCC BAA-793 / NCIMB 8826 / WCFS1</strain>
    </source>
</reference>
<accession>Q88UE4</accession>
<accession>F9UR70</accession>
<name>HIS3_LACPL</name>
<evidence type="ECO:0000255" key="1">
    <source>
        <dbReference type="HAMAP-Rule" id="MF_01021"/>
    </source>
</evidence>
<keyword id="KW-0028">Amino-acid biosynthesis</keyword>
<keyword id="KW-0963">Cytoplasm</keyword>
<keyword id="KW-0368">Histidine biosynthesis</keyword>
<keyword id="KW-0378">Hydrolase</keyword>
<keyword id="KW-0460">Magnesium</keyword>
<keyword id="KW-0479">Metal-binding</keyword>
<keyword id="KW-1185">Reference proteome</keyword>
<keyword id="KW-0862">Zinc</keyword>
<sequence>MKPDFEKGDGLLTTVVTDADTKDVLMVAWMNAESYQRTLASGQTWFWSRSRQELWHKGATSGNLQDVVSMTLDCDQDTLLVAVHPHGPACHTGHTSCFFNPVELEQGA</sequence>
<comment type="function">
    <text evidence="1">Catalyzes the hydrolysis of the adenine ring of phosphoribosyl-AMP.</text>
</comment>
<comment type="catalytic activity">
    <reaction evidence="1">
        <text>1-(5-phospho-beta-D-ribosyl)-5'-AMP + H2O = 1-(5-phospho-beta-D-ribosyl)-5-[(5-phospho-beta-D-ribosylamino)methylideneamino]imidazole-4-carboxamide</text>
        <dbReference type="Rhea" id="RHEA:20049"/>
        <dbReference type="ChEBI" id="CHEBI:15377"/>
        <dbReference type="ChEBI" id="CHEBI:58435"/>
        <dbReference type="ChEBI" id="CHEBI:59457"/>
        <dbReference type="EC" id="3.5.4.19"/>
    </reaction>
</comment>
<comment type="cofactor">
    <cofactor evidence="1">
        <name>Mg(2+)</name>
        <dbReference type="ChEBI" id="CHEBI:18420"/>
    </cofactor>
    <text evidence="1">Binds 1 Mg(2+) ion per subunit.</text>
</comment>
<comment type="cofactor">
    <cofactor evidence="1">
        <name>Zn(2+)</name>
        <dbReference type="ChEBI" id="CHEBI:29105"/>
    </cofactor>
    <text evidence="1">Binds 1 zinc ion per subunit.</text>
</comment>
<comment type="pathway">
    <text evidence="1">Amino-acid biosynthesis; L-histidine biosynthesis; L-histidine from 5-phospho-alpha-D-ribose 1-diphosphate: step 3/9.</text>
</comment>
<comment type="subunit">
    <text evidence="1">Homodimer.</text>
</comment>
<comment type="subcellular location">
    <subcellularLocation>
        <location evidence="1">Cytoplasm</location>
    </subcellularLocation>
</comment>
<comment type="similarity">
    <text evidence="1">Belongs to the PRA-CH family.</text>
</comment>
<organism>
    <name type="scientific">Lactiplantibacillus plantarum (strain ATCC BAA-793 / NCIMB 8826 / WCFS1)</name>
    <name type="common">Lactobacillus plantarum</name>
    <dbReference type="NCBI Taxonomy" id="220668"/>
    <lineage>
        <taxon>Bacteria</taxon>
        <taxon>Bacillati</taxon>
        <taxon>Bacillota</taxon>
        <taxon>Bacilli</taxon>
        <taxon>Lactobacillales</taxon>
        <taxon>Lactobacillaceae</taxon>
        <taxon>Lactiplantibacillus</taxon>
    </lineage>
</organism>
<gene>
    <name evidence="1" type="primary">hisI</name>
    <name type="ordered locus">lp_2553</name>
</gene>